<organism>
    <name type="scientific">Cyanidium caldarium</name>
    <name type="common">Red alga</name>
    <dbReference type="NCBI Taxonomy" id="2771"/>
    <lineage>
        <taxon>Eukaryota</taxon>
        <taxon>Rhodophyta</taxon>
        <taxon>Bangiophyceae</taxon>
        <taxon>Cyanidiales</taxon>
        <taxon>Cyanidiaceae</taxon>
        <taxon>Cyanidium</taxon>
    </lineage>
</organism>
<comment type="function">
    <text evidence="1">One of the primary rRNA binding proteins, it binds directly to 16S rRNA where it nucleates assembly of the body of the 30S subunit.</text>
</comment>
<comment type="function">
    <text evidence="1">With S5 and S12 plays an important role in translational accuracy.</text>
</comment>
<comment type="subunit">
    <text evidence="1">Part of the 30S ribosomal subunit. Contacts protein S5. The interaction surface between S4 and S5 is involved in control of translational fidelity.</text>
</comment>
<comment type="subcellular location">
    <subcellularLocation>
        <location evidence="1 2">Plastid</location>
        <location evidence="1 2">Chloroplast</location>
    </subcellularLocation>
</comment>
<comment type="similarity">
    <text evidence="1">Belongs to the universal ribosomal protein uS4 family.</text>
</comment>
<protein>
    <recommendedName>
        <fullName evidence="1 2">Small ribosomal subunit protein uS4c-1</fullName>
    </recommendedName>
    <alternativeName>
        <fullName evidence="2">30S ribosomal protein S4, chloroplastic</fullName>
    </alternativeName>
</protein>
<gene>
    <name evidence="1" type="primary">rps4</name>
</gene>
<keyword id="KW-0150">Chloroplast</keyword>
<keyword id="KW-0934">Plastid</keyword>
<keyword id="KW-0687">Ribonucleoprotein</keyword>
<keyword id="KW-0689">Ribosomal protein</keyword>
<keyword id="KW-0694">RNA-binding</keyword>
<keyword id="KW-0699">rRNA-binding</keyword>
<feature type="chain" id="PRO_0000132561" description="Small ribosomal subunit protein uS4c-1">
    <location>
        <begin position="1"/>
        <end position="202"/>
    </location>
</feature>
<feature type="domain" description="S4 RNA-binding" evidence="1">
    <location>
        <begin position="90"/>
        <end position="152"/>
    </location>
</feature>
<sequence length="202" mass="23393">MSRYTGPKIRIIRRLGELPALTTKKVKNNYPPGREWSTNEELSEYAIRLQEKQKIRFNYGINEKQLRRYVKKAKKSRGSTGSYLLNLLEMRLDNIVLRAGLAPTIAASRQLVSHKHIEVNNKIVNIPSFQCSIGDTIHVKKSNKSRQLIDLNSRRDTTKFFPKYLEVNKDNMGARVVKTMDKQDVNLTINELLVVEFYSRKG</sequence>
<geneLocation type="chloroplast"/>
<accession>Q9TLY7</accession>
<name>RR4A_CYACA</name>
<proteinExistence type="inferred from homology"/>
<reference key="1">
    <citation type="journal article" date="2000" name="J. Mol. Evol.">
        <title>The structure and gene repertoire of an ancient red algal plastid genome.</title>
        <authorList>
            <person name="Gloeckner G."/>
            <person name="Rosenthal A."/>
            <person name="Valentin K.-U."/>
        </authorList>
    </citation>
    <scope>NUCLEOTIDE SEQUENCE [LARGE SCALE GENOMIC DNA]</scope>
    <source>
        <strain>RK-1</strain>
    </source>
</reference>
<evidence type="ECO:0000255" key="1">
    <source>
        <dbReference type="HAMAP-Rule" id="MF_01306"/>
    </source>
</evidence>
<evidence type="ECO:0000305" key="2"/>
<dbReference type="EMBL" id="AF022186">
    <property type="protein sequence ID" value="AAF12964.1"/>
    <property type="molecule type" value="Genomic_DNA"/>
</dbReference>
<dbReference type="RefSeq" id="NP_045130.1">
    <property type="nucleotide sequence ID" value="NC_001840.1"/>
</dbReference>
<dbReference type="SMR" id="Q9TLY7"/>
<dbReference type="GeneID" id="800222"/>
<dbReference type="GO" id="GO:0009507">
    <property type="term" value="C:chloroplast"/>
    <property type="evidence" value="ECO:0007669"/>
    <property type="project" value="UniProtKB-SubCell"/>
</dbReference>
<dbReference type="GO" id="GO:0015935">
    <property type="term" value="C:small ribosomal subunit"/>
    <property type="evidence" value="ECO:0007669"/>
    <property type="project" value="InterPro"/>
</dbReference>
<dbReference type="GO" id="GO:0019843">
    <property type="term" value="F:rRNA binding"/>
    <property type="evidence" value="ECO:0007669"/>
    <property type="project" value="UniProtKB-UniRule"/>
</dbReference>
<dbReference type="GO" id="GO:0003735">
    <property type="term" value="F:structural constituent of ribosome"/>
    <property type="evidence" value="ECO:0007669"/>
    <property type="project" value="InterPro"/>
</dbReference>
<dbReference type="GO" id="GO:0042274">
    <property type="term" value="P:ribosomal small subunit biogenesis"/>
    <property type="evidence" value="ECO:0007669"/>
    <property type="project" value="TreeGrafter"/>
</dbReference>
<dbReference type="GO" id="GO:0006412">
    <property type="term" value="P:translation"/>
    <property type="evidence" value="ECO:0007669"/>
    <property type="project" value="UniProtKB-UniRule"/>
</dbReference>
<dbReference type="CDD" id="cd00165">
    <property type="entry name" value="S4"/>
    <property type="match status" value="1"/>
</dbReference>
<dbReference type="FunFam" id="3.10.290.10:FF:000001">
    <property type="entry name" value="30S ribosomal protein S4"/>
    <property type="match status" value="1"/>
</dbReference>
<dbReference type="FunFam" id="1.10.1050.10:FF:000002">
    <property type="entry name" value="30S ribosomal protein S4, chloroplastic"/>
    <property type="match status" value="1"/>
</dbReference>
<dbReference type="Gene3D" id="1.10.1050.10">
    <property type="entry name" value="Ribosomal Protein S4 Delta 41, Chain A, domain 1"/>
    <property type="match status" value="1"/>
</dbReference>
<dbReference type="Gene3D" id="3.10.290.10">
    <property type="entry name" value="RNA-binding S4 domain"/>
    <property type="match status" value="1"/>
</dbReference>
<dbReference type="HAMAP" id="MF_01306_B">
    <property type="entry name" value="Ribosomal_uS4_B"/>
    <property type="match status" value="1"/>
</dbReference>
<dbReference type="InterPro" id="IPR022801">
    <property type="entry name" value="Ribosomal_uS4"/>
</dbReference>
<dbReference type="InterPro" id="IPR005709">
    <property type="entry name" value="Ribosomal_uS4_bac-type"/>
</dbReference>
<dbReference type="InterPro" id="IPR018079">
    <property type="entry name" value="Ribosomal_uS4_CS"/>
</dbReference>
<dbReference type="InterPro" id="IPR001912">
    <property type="entry name" value="Ribosomal_uS4_N"/>
</dbReference>
<dbReference type="InterPro" id="IPR002942">
    <property type="entry name" value="S4_RNA-bd"/>
</dbReference>
<dbReference type="InterPro" id="IPR036986">
    <property type="entry name" value="S4_RNA-bd_sf"/>
</dbReference>
<dbReference type="NCBIfam" id="NF003717">
    <property type="entry name" value="PRK05327.1"/>
    <property type="match status" value="1"/>
</dbReference>
<dbReference type="NCBIfam" id="TIGR01017">
    <property type="entry name" value="rpsD_bact"/>
    <property type="match status" value="1"/>
</dbReference>
<dbReference type="PANTHER" id="PTHR11831">
    <property type="entry name" value="30S 40S RIBOSOMAL PROTEIN"/>
    <property type="match status" value="1"/>
</dbReference>
<dbReference type="PANTHER" id="PTHR11831:SF4">
    <property type="entry name" value="SMALL RIBOSOMAL SUBUNIT PROTEIN US4M"/>
    <property type="match status" value="1"/>
</dbReference>
<dbReference type="Pfam" id="PF00163">
    <property type="entry name" value="Ribosomal_S4"/>
    <property type="match status" value="1"/>
</dbReference>
<dbReference type="Pfam" id="PF01479">
    <property type="entry name" value="S4"/>
    <property type="match status" value="1"/>
</dbReference>
<dbReference type="SMART" id="SM01390">
    <property type="entry name" value="Ribosomal_S4"/>
    <property type="match status" value="1"/>
</dbReference>
<dbReference type="SMART" id="SM00363">
    <property type="entry name" value="S4"/>
    <property type="match status" value="1"/>
</dbReference>
<dbReference type="SUPFAM" id="SSF55174">
    <property type="entry name" value="Alpha-L RNA-binding motif"/>
    <property type="match status" value="1"/>
</dbReference>
<dbReference type="PROSITE" id="PS00632">
    <property type="entry name" value="RIBOSOMAL_S4"/>
    <property type="match status" value="1"/>
</dbReference>
<dbReference type="PROSITE" id="PS50889">
    <property type="entry name" value="S4"/>
    <property type="match status" value="1"/>
</dbReference>